<gene>
    <name evidence="1" type="primary">hemF</name>
    <name type="ordered locus">CV_0757</name>
</gene>
<organism>
    <name type="scientific">Chromobacterium violaceum (strain ATCC 12472 / DSM 30191 / JCM 1249 / CCUG 213 / NBRC 12614 / NCIMB 9131 / NCTC 9757 / MK)</name>
    <dbReference type="NCBI Taxonomy" id="243365"/>
    <lineage>
        <taxon>Bacteria</taxon>
        <taxon>Pseudomonadati</taxon>
        <taxon>Pseudomonadota</taxon>
        <taxon>Betaproteobacteria</taxon>
        <taxon>Neisseriales</taxon>
        <taxon>Chromobacteriaceae</taxon>
        <taxon>Chromobacterium</taxon>
    </lineage>
</organism>
<evidence type="ECO:0000255" key="1">
    <source>
        <dbReference type="HAMAP-Rule" id="MF_00333"/>
    </source>
</evidence>
<feature type="chain" id="PRO_0000109892" description="Oxygen-dependent coproporphyrinogen-III oxidase">
    <location>
        <begin position="1"/>
        <end position="302"/>
    </location>
</feature>
<feature type="region of interest" description="Important for dimerization" evidence="1">
    <location>
        <begin position="242"/>
        <end position="277"/>
    </location>
</feature>
<feature type="active site" description="Proton donor" evidence="1">
    <location>
        <position position="108"/>
    </location>
</feature>
<feature type="binding site" evidence="1">
    <location>
        <position position="94"/>
    </location>
    <ligand>
        <name>substrate</name>
    </ligand>
</feature>
<feature type="binding site" evidence="1">
    <location>
        <position position="98"/>
    </location>
    <ligand>
        <name>a divalent metal cation</name>
        <dbReference type="ChEBI" id="CHEBI:60240"/>
    </ligand>
</feature>
<feature type="binding site" evidence="1">
    <location>
        <position position="108"/>
    </location>
    <ligand>
        <name>a divalent metal cation</name>
        <dbReference type="ChEBI" id="CHEBI:60240"/>
    </ligand>
</feature>
<feature type="binding site" evidence="1">
    <location>
        <begin position="110"/>
        <end position="112"/>
    </location>
    <ligand>
        <name>substrate</name>
    </ligand>
</feature>
<feature type="binding site" evidence="1">
    <location>
        <position position="147"/>
    </location>
    <ligand>
        <name>a divalent metal cation</name>
        <dbReference type="ChEBI" id="CHEBI:60240"/>
    </ligand>
</feature>
<feature type="binding site" evidence="1">
    <location>
        <position position="177"/>
    </location>
    <ligand>
        <name>a divalent metal cation</name>
        <dbReference type="ChEBI" id="CHEBI:60240"/>
    </ligand>
</feature>
<feature type="binding site" evidence="1">
    <location>
        <begin position="260"/>
        <end position="262"/>
    </location>
    <ligand>
        <name>substrate</name>
    </ligand>
</feature>
<feature type="site" description="Important for dimerization" evidence="1">
    <location>
        <position position="177"/>
    </location>
</feature>
<reference key="1">
    <citation type="journal article" date="2003" name="Proc. Natl. Acad. Sci. U.S.A.">
        <title>The complete genome sequence of Chromobacterium violaceum reveals remarkable and exploitable bacterial adaptability.</title>
        <authorList>
            <person name="Vasconcelos A.T.R."/>
            <person name="de Almeida D.F."/>
            <person name="Hungria M."/>
            <person name="Guimaraes C.T."/>
            <person name="Antonio R.V."/>
            <person name="Almeida F.C."/>
            <person name="de Almeida L.G.P."/>
            <person name="de Almeida R."/>
            <person name="Alves-Gomes J.A."/>
            <person name="Andrade E.M."/>
            <person name="Araripe J."/>
            <person name="de Araujo M.F.F."/>
            <person name="Astolfi-Filho S."/>
            <person name="Azevedo V."/>
            <person name="Baptista A.J."/>
            <person name="Bataus L.A.M."/>
            <person name="Batista J.S."/>
            <person name="Belo A."/>
            <person name="van den Berg C."/>
            <person name="Bogo M."/>
            <person name="Bonatto S."/>
            <person name="Bordignon J."/>
            <person name="Brigido M.M."/>
            <person name="Brito C.A."/>
            <person name="Brocchi M."/>
            <person name="Burity H.A."/>
            <person name="Camargo A.A."/>
            <person name="Cardoso D.D.P."/>
            <person name="Carneiro N.P."/>
            <person name="Carraro D.M."/>
            <person name="Carvalho C.M.B."/>
            <person name="Cascardo J.C.M."/>
            <person name="Cavada B.S."/>
            <person name="Chueire L.M.O."/>
            <person name="Creczynski-Pasa T.B."/>
            <person name="Cunha-Junior N.C."/>
            <person name="Fagundes N."/>
            <person name="Falcao C.L."/>
            <person name="Fantinatti F."/>
            <person name="Farias I.P."/>
            <person name="Felipe M.S.S."/>
            <person name="Ferrari L.P."/>
            <person name="Ferro J.A."/>
            <person name="Ferro M.I.T."/>
            <person name="Franco G.R."/>
            <person name="Freitas N.S.A."/>
            <person name="Furlan L.R."/>
            <person name="Gazzinelli R.T."/>
            <person name="Gomes E.A."/>
            <person name="Goncalves P.R."/>
            <person name="Grangeiro T.B."/>
            <person name="Grattapaglia D."/>
            <person name="Grisard E.C."/>
            <person name="Hanna E.S."/>
            <person name="Jardim S.N."/>
            <person name="Laurino J."/>
            <person name="Leoi L.C.T."/>
            <person name="Lima L.F.A."/>
            <person name="Loureiro M.F."/>
            <person name="Lyra M.C.C.P."/>
            <person name="Madeira H.M.F."/>
            <person name="Manfio G.P."/>
            <person name="Maranhao A.Q."/>
            <person name="Martins W.S."/>
            <person name="di Mauro S.M.Z."/>
            <person name="de Medeiros S.R.B."/>
            <person name="Meissner R.V."/>
            <person name="Moreira M.A.M."/>
            <person name="Nascimento F.F."/>
            <person name="Nicolas M.F."/>
            <person name="Oliveira J.G."/>
            <person name="Oliveira S.C."/>
            <person name="Paixao R.F.C."/>
            <person name="Parente J.A."/>
            <person name="Pedrosa F.O."/>
            <person name="Pena S.D.J."/>
            <person name="Pereira J.O."/>
            <person name="Pereira M."/>
            <person name="Pinto L.S.R.C."/>
            <person name="Pinto L.S."/>
            <person name="Porto J.I.R."/>
            <person name="Potrich D.P."/>
            <person name="Ramalho-Neto C.E."/>
            <person name="Reis A.M.M."/>
            <person name="Rigo L.U."/>
            <person name="Rondinelli E."/>
            <person name="Santos E.B.P."/>
            <person name="Santos F.R."/>
            <person name="Schneider M.P.C."/>
            <person name="Seuanez H.N."/>
            <person name="Silva A.M.R."/>
            <person name="da Silva A.L.C."/>
            <person name="Silva D.W."/>
            <person name="Silva R."/>
            <person name="Simoes I.C."/>
            <person name="Simon D."/>
            <person name="Soares C.M.A."/>
            <person name="Soares R.B.A."/>
            <person name="Souza E.M."/>
            <person name="Souza K.R.L."/>
            <person name="Souza R.C."/>
            <person name="Steffens M.B.R."/>
            <person name="Steindel M."/>
            <person name="Teixeira S.R."/>
            <person name="Urmenyi T."/>
            <person name="Vettore A."/>
            <person name="Wassem R."/>
            <person name="Zaha A."/>
            <person name="Simpson A.J.G."/>
        </authorList>
    </citation>
    <scope>NUCLEOTIDE SEQUENCE [LARGE SCALE GENOMIC DNA]</scope>
    <source>
        <strain>ATCC 12472 / DSM 30191 / JCM 1249 / CCUG 213 / NBRC 12614 / NCIMB 9131 / NCTC 9757 / MK</strain>
    </source>
</reference>
<sequence>MSHPHSNAVKSFLLDLQDRICAALEQADGKAQFAEDAWSREAGGGGRSRVLTGGEVFEQAGVNFSHVHGDALPPSASAHRPELAGRRFEAMGVSLVIHPSNPHVPTSHANVRFFIAEKDGEAPVWWFGGGFDLTPFYPQEEDAVHWHTVARDLCAPFGGDVYPRYKKWCDEYFHLKHRNEARGIGGLFFDDLNEWGFDKSFAFTRAVGDGYLDAYLPIVARRKEQAWGDRERQFQLYRRGRYVEFNLVWDRGTLFGLQSGGRTESILMSMPPLVRWEYGYQPEPGSPEARLYTDFLPPRDWV</sequence>
<dbReference type="EC" id="1.3.3.3" evidence="1"/>
<dbReference type="EMBL" id="AE016825">
    <property type="protein sequence ID" value="AAQ58433.1"/>
    <property type="molecule type" value="Genomic_DNA"/>
</dbReference>
<dbReference type="RefSeq" id="WP_011134312.1">
    <property type="nucleotide sequence ID" value="NC_005085.1"/>
</dbReference>
<dbReference type="SMR" id="Q7P012"/>
<dbReference type="STRING" id="243365.CV_0757"/>
<dbReference type="GeneID" id="66365346"/>
<dbReference type="KEGG" id="cvi:CV_0757"/>
<dbReference type="eggNOG" id="COG0408">
    <property type="taxonomic scope" value="Bacteria"/>
</dbReference>
<dbReference type="HOGENOM" id="CLU_026169_0_1_4"/>
<dbReference type="OrthoDB" id="9777553at2"/>
<dbReference type="UniPathway" id="UPA00251">
    <property type="reaction ID" value="UER00322"/>
</dbReference>
<dbReference type="Proteomes" id="UP000001424">
    <property type="component" value="Chromosome"/>
</dbReference>
<dbReference type="GO" id="GO:0005737">
    <property type="term" value="C:cytoplasm"/>
    <property type="evidence" value="ECO:0007669"/>
    <property type="project" value="UniProtKB-SubCell"/>
</dbReference>
<dbReference type="GO" id="GO:0004109">
    <property type="term" value="F:coproporphyrinogen oxidase activity"/>
    <property type="evidence" value="ECO:0007669"/>
    <property type="project" value="UniProtKB-UniRule"/>
</dbReference>
<dbReference type="GO" id="GO:0046872">
    <property type="term" value="F:metal ion binding"/>
    <property type="evidence" value="ECO:0007669"/>
    <property type="project" value="UniProtKB-KW"/>
</dbReference>
<dbReference type="GO" id="GO:0042803">
    <property type="term" value="F:protein homodimerization activity"/>
    <property type="evidence" value="ECO:0000250"/>
    <property type="project" value="UniProtKB"/>
</dbReference>
<dbReference type="GO" id="GO:0006782">
    <property type="term" value="P:protoporphyrinogen IX biosynthetic process"/>
    <property type="evidence" value="ECO:0007669"/>
    <property type="project" value="UniProtKB-UniRule"/>
</dbReference>
<dbReference type="FunFam" id="3.40.1500.10:FF:000001">
    <property type="entry name" value="Oxygen-dependent coproporphyrinogen-III oxidase"/>
    <property type="match status" value="1"/>
</dbReference>
<dbReference type="Gene3D" id="3.40.1500.10">
    <property type="entry name" value="Coproporphyrinogen III oxidase, aerobic"/>
    <property type="match status" value="1"/>
</dbReference>
<dbReference type="HAMAP" id="MF_00333">
    <property type="entry name" value="Coprogen_oxidas"/>
    <property type="match status" value="1"/>
</dbReference>
<dbReference type="InterPro" id="IPR001260">
    <property type="entry name" value="Coprogen_oxidase_aer"/>
</dbReference>
<dbReference type="InterPro" id="IPR036406">
    <property type="entry name" value="Coprogen_oxidase_aer_sf"/>
</dbReference>
<dbReference type="InterPro" id="IPR018375">
    <property type="entry name" value="Coprogen_oxidase_CS"/>
</dbReference>
<dbReference type="NCBIfam" id="NF003727">
    <property type="entry name" value="PRK05330.1"/>
    <property type="match status" value="1"/>
</dbReference>
<dbReference type="PANTHER" id="PTHR10755">
    <property type="entry name" value="COPROPORPHYRINOGEN III OXIDASE, MITOCHONDRIAL"/>
    <property type="match status" value="1"/>
</dbReference>
<dbReference type="PANTHER" id="PTHR10755:SF0">
    <property type="entry name" value="OXYGEN-DEPENDENT COPROPORPHYRINOGEN-III OXIDASE, MITOCHONDRIAL"/>
    <property type="match status" value="1"/>
</dbReference>
<dbReference type="Pfam" id="PF01218">
    <property type="entry name" value="Coprogen_oxidas"/>
    <property type="match status" value="1"/>
</dbReference>
<dbReference type="PIRSF" id="PIRSF000166">
    <property type="entry name" value="Coproporphyri_ox"/>
    <property type="match status" value="1"/>
</dbReference>
<dbReference type="PRINTS" id="PR00073">
    <property type="entry name" value="COPRGNOXDASE"/>
</dbReference>
<dbReference type="SUPFAM" id="SSF102886">
    <property type="entry name" value="Coproporphyrinogen III oxidase"/>
    <property type="match status" value="1"/>
</dbReference>
<dbReference type="PROSITE" id="PS01021">
    <property type="entry name" value="COPROGEN_OXIDASE"/>
    <property type="match status" value="1"/>
</dbReference>
<keyword id="KW-0963">Cytoplasm</keyword>
<keyword id="KW-0350">Heme biosynthesis</keyword>
<keyword id="KW-0479">Metal-binding</keyword>
<keyword id="KW-0560">Oxidoreductase</keyword>
<keyword id="KW-0627">Porphyrin biosynthesis</keyword>
<keyword id="KW-1185">Reference proteome</keyword>
<name>HEM6_CHRVO</name>
<proteinExistence type="inferred from homology"/>
<accession>Q7P012</accession>
<protein>
    <recommendedName>
        <fullName evidence="1">Oxygen-dependent coproporphyrinogen-III oxidase</fullName>
        <shortName evidence="1">CPO</shortName>
        <shortName evidence="1">Coprogen oxidase</shortName>
        <shortName evidence="1">Coproporphyrinogenase</shortName>
        <ecNumber evidence="1">1.3.3.3</ecNumber>
    </recommendedName>
</protein>
<comment type="function">
    <text evidence="1">Involved in the heme biosynthesis. Catalyzes the aerobic oxidative decarboxylation of propionate groups of rings A and B of coproporphyrinogen-III to yield the vinyl groups in protoporphyrinogen-IX.</text>
</comment>
<comment type="catalytic activity">
    <reaction evidence="1">
        <text>coproporphyrinogen III + O2 + 2 H(+) = protoporphyrinogen IX + 2 CO2 + 2 H2O</text>
        <dbReference type="Rhea" id="RHEA:18257"/>
        <dbReference type="ChEBI" id="CHEBI:15377"/>
        <dbReference type="ChEBI" id="CHEBI:15378"/>
        <dbReference type="ChEBI" id="CHEBI:15379"/>
        <dbReference type="ChEBI" id="CHEBI:16526"/>
        <dbReference type="ChEBI" id="CHEBI:57307"/>
        <dbReference type="ChEBI" id="CHEBI:57309"/>
        <dbReference type="EC" id="1.3.3.3"/>
    </reaction>
</comment>
<comment type="cofactor">
    <cofactor evidence="1">
        <name>a divalent metal cation</name>
        <dbReference type="ChEBI" id="CHEBI:60240"/>
    </cofactor>
</comment>
<comment type="pathway">
    <text evidence="1">Porphyrin-containing compound metabolism; protoporphyrin-IX biosynthesis; protoporphyrinogen-IX from coproporphyrinogen-III (O2 route): step 1/1.</text>
</comment>
<comment type="subunit">
    <text evidence="1">Homodimer.</text>
</comment>
<comment type="subcellular location">
    <subcellularLocation>
        <location evidence="1">Cytoplasm</location>
    </subcellularLocation>
</comment>
<comment type="similarity">
    <text evidence="1">Belongs to the aerobic coproporphyrinogen-III oxidase family.</text>
</comment>